<feature type="chain" id="PRO_0000357198" description="Methylthioribose-1-phosphate isomerase">
    <location>
        <begin position="1"/>
        <end position="357"/>
    </location>
</feature>
<feature type="active site" description="Proton donor" evidence="1">
    <location>
        <position position="238"/>
    </location>
</feature>
<feature type="binding site" evidence="1">
    <location>
        <begin position="49"/>
        <end position="51"/>
    </location>
    <ligand>
        <name>substrate</name>
    </ligand>
</feature>
<feature type="binding site" evidence="1">
    <location>
        <position position="89"/>
    </location>
    <ligand>
        <name>substrate</name>
    </ligand>
</feature>
<feature type="binding site" evidence="1">
    <location>
        <position position="197"/>
    </location>
    <ligand>
        <name>substrate</name>
    </ligand>
</feature>
<feature type="binding site" evidence="1">
    <location>
        <begin position="248"/>
        <end position="249"/>
    </location>
    <ligand>
        <name>substrate</name>
    </ligand>
</feature>
<feature type="site" description="Transition state stabilizer" evidence="1">
    <location>
        <position position="158"/>
    </location>
</feature>
<reference key="1">
    <citation type="journal article" date="2008" name="PLoS ONE">
        <title>Genome sequence of the saprophyte Leptospira biflexa provides insights into the evolution of Leptospira and the pathogenesis of leptospirosis.</title>
        <authorList>
            <person name="Picardeau M."/>
            <person name="Bulach D.M."/>
            <person name="Bouchier C."/>
            <person name="Zuerner R.L."/>
            <person name="Zidane N."/>
            <person name="Wilson P.J."/>
            <person name="Creno S."/>
            <person name="Kuczek E.S."/>
            <person name="Bommezzadri S."/>
            <person name="Davis J.C."/>
            <person name="McGrath A."/>
            <person name="Johnson M.J."/>
            <person name="Boursaux-Eude C."/>
            <person name="Seemann T."/>
            <person name="Rouy Z."/>
            <person name="Coppel R.L."/>
            <person name="Rood J.I."/>
            <person name="Lajus A."/>
            <person name="Davies J.K."/>
            <person name="Medigue C."/>
            <person name="Adler B."/>
        </authorList>
    </citation>
    <scope>NUCLEOTIDE SEQUENCE [LARGE SCALE GENOMIC DNA]</scope>
    <source>
        <strain>Patoc 1 / Ames</strain>
    </source>
</reference>
<dbReference type="EC" id="5.3.1.23" evidence="1"/>
<dbReference type="EMBL" id="CP000777">
    <property type="protein sequence ID" value="ABZ95304.1"/>
    <property type="molecule type" value="Genomic_DNA"/>
</dbReference>
<dbReference type="RefSeq" id="WP_012389853.1">
    <property type="nucleotide sequence ID" value="NC_010842.1"/>
</dbReference>
<dbReference type="SMR" id="B0SFD6"/>
<dbReference type="KEGG" id="lbf:LBF_2827"/>
<dbReference type="HOGENOM" id="CLU_016218_1_2_12"/>
<dbReference type="UniPathway" id="UPA00904">
    <property type="reaction ID" value="UER00874"/>
</dbReference>
<dbReference type="GO" id="GO:0046523">
    <property type="term" value="F:S-methyl-5-thioribose-1-phosphate isomerase activity"/>
    <property type="evidence" value="ECO:0007669"/>
    <property type="project" value="UniProtKB-UniRule"/>
</dbReference>
<dbReference type="GO" id="GO:0019509">
    <property type="term" value="P:L-methionine salvage from methylthioadenosine"/>
    <property type="evidence" value="ECO:0007669"/>
    <property type="project" value="UniProtKB-UniRule"/>
</dbReference>
<dbReference type="FunFam" id="1.20.120.420:FF:000003">
    <property type="entry name" value="Methylthioribose-1-phosphate isomerase"/>
    <property type="match status" value="1"/>
</dbReference>
<dbReference type="FunFam" id="3.40.50.10470:FF:000006">
    <property type="entry name" value="Methylthioribose-1-phosphate isomerase"/>
    <property type="match status" value="1"/>
</dbReference>
<dbReference type="Gene3D" id="1.20.120.420">
    <property type="entry name" value="translation initiation factor eif-2b, domain 1"/>
    <property type="match status" value="1"/>
</dbReference>
<dbReference type="Gene3D" id="3.40.50.10470">
    <property type="entry name" value="Translation initiation factor eif-2b, domain 2"/>
    <property type="match status" value="1"/>
</dbReference>
<dbReference type="HAMAP" id="MF_01678">
    <property type="entry name" value="Salvage_MtnA"/>
    <property type="match status" value="1"/>
</dbReference>
<dbReference type="InterPro" id="IPR000649">
    <property type="entry name" value="IF-2B-related"/>
</dbReference>
<dbReference type="InterPro" id="IPR005251">
    <property type="entry name" value="IF-M1Pi"/>
</dbReference>
<dbReference type="InterPro" id="IPR042529">
    <property type="entry name" value="IF_2B-like_C"/>
</dbReference>
<dbReference type="InterPro" id="IPR011559">
    <property type="entry name" value="Initiation_fac_2B_a/b/d"/>
</dbReference>
<dbReference type="InterPro" id="IPR027363">
    <property type="entry name" value="M1Pi_N"/>
</dbReference>
<dbReference type="InterPro" id="IPR037171">
    <property type="entry name" value="NagB/RpiA_transferase-like"/>
</dbReference>
<dbReference type="InterPro" id="IPR001763">
    <property type="entry name" value="Rhodanese-like_dom"/>
</dbReference>
<dbReference type="NCBIfam" id="TIGR00524">
    <property type="entry name" value="eIF-2B_rel"/>
    <property type="match status" value="1"/>
</dbReference>
<dbReference type="NCBIfam" id="NF004326">
    <property type="entry name" value="PRK05720.1"/>
    <property type="match status" value="1"/>
</dbReference>
<dbReference type="NCBIfam" id="TIGR00512">
    <property type="entry name" value="salvage_mtnA"/>
    <property type="match status" value="1"/>
</dbReference>
<dbReference type="PANTHER" id="PTHR43475">
    <property type="entry name" value="METHYLTHIORIBOSE-1-PHOSPHATE ISOMERASE"/>
    <property type="match status" value="1"/>
</dbReference>
<dbReference type="PANTHER" id="PTHR43475:SF1">
    <property type="entry name" value="METHYLTHIORIBOSE-1-PHOSPHATE ISOMERASE"/>
    <property type="match status" value="1"/>
</dbReference>
<dbReference type="Pfam" id="PF01008">
    <property type="entry name" value="IF-2B"/>
    <property type="match status" value="1"/>
</dbReference>
<dbReference type="SUPFAM" id="SSF100950">
    <property type="entry name" value="NagB/RpiA/CoA transferase-like"/>
    <property type="match status" value="1"/>
</dbReference>
<gene>
    <name evidence="1" type="primary">mtnA</name>
    <name type="ordered locus">LBF_2827</name>
</gene>
<name>MTNA_LEPBA</name>
<sequence>MSQPEFLPIQWKSTFLSLLDQRVLPGKKEFLQIQTMEETIVAIREMAVRGAPAIAITGIFGITLGAKKKSGNSNPVDVDSLIKQVFESRPTAVNLSFALKEAKKRVEGVSHWDSIAKVWESYALEMMVQDLKANQTLGKNGADLFPKNQNEFHIITHCNTGALATAGHGTALGVIRSLRDQGKKVVVYADETRPFLQGSRLTAFEMMEEGIECYIITDGMSGWLMNHRKIDAVLVGCDRVATNGDTANKIGTYNLAIVAYEHKVPFYVCATKDSFDLKLKTGDEIPIEMRKESEVTQFDFLKNEEGNFLFPEGKTSPIGARALNPSFDITKAKFIKNFITELGCFVPEEISFRLKNV</sequence>
<comment type="function">
    <text evidence="1">Catalyzes the interconversion of methylthioribose-1-phosphate (MTR-1-P) into methylthioribulose-1-phosphate (MTRu-1-P).</text>
</comment>
<comment type="catalytic activity">
    <reaction evidence="1">
        <text>5-(methylsulfanyl)-alpha-D-ribose 1-phosphate = 5-(methylsulfanyl)-D-ribulose 1-phosphate</text>
        <dbReference type="Rhea" id="RHEA:19989"/>
        <dbReference type="ChEBI" id="CHEBI:58533"/>
        <dbReference type="ChEBI" id="CHEBI:58548"/>
        <dbReference type="EC" id="5.3.1.23"/>
    </reaction>
</comment>
<comment type="pathway">
    <text evidence="1">Amino-acid biosynthesis; L-methionine biosynthesis via salvage pathway; L-methionine from S-methyl-5-thio-alpha-D-ribose 1-phosphate: step 1/6.</text>
</comment>
<comment type="similarity">
    <text evidence="2">Belongs to the eIF-2B alpha/beta/delta subunits family. MtnA subfamily.</text>
</comment>
<keyword id="KW-0028">Amino-acid biosynthesis</keyword>
<keyword id="KW-0413">Isomerase</keyword>
<keyword id="KW-0486">Methionine biosynthesis</keyword>
<proteinExistence type="inferred from homology"/>
<accession>B0SFD6</accession>
<protein>
    <recommendedName>
        <fullName evidence="1">Methylthioribose-1-phosphate isomerase</fullName>
        <shortName evidence="1">M1Pi</shortName>
        <shortName evidence="1">MTR-1-P isomerase</shortName>
        <ecNumber evidence="1">5.3.1.23</ecNumber>
    </recommendedName>
    <alternativeName>
        <fullName evidence="1">S-methyl-5-thioribose-1-phosphate isomerase</fullName>
    </alternativeName>
</protein>
<evidence type="ECO:0000255" key="1">
    <source>
        <dbReference type="HAMAP-Rule" id="MF_01678"/>
    </source>
</evidence>
<evidence type="ECO:0000305" key="2"/>
<organism>
    <name type="scientific">Leptospira biflexa serovar Patoc (strain Patoc 1 / Ames)</name>
    <dbReference type="NCBI Taxonomy" id="355278"/>
    <lineage>
        <taxon>Bacteria</taxon>
        <taxon>Pseudomonadati</taxon>
        <taxon>Spirochaetota</taxon>
        <taxon>Spirochaetia</taxon>
        <taxon>Leptospirales</taxon>
        <taxon>Leptospiraceae</taxon>
        <taxon>Leptospira</taxon>
    </lineage>
</organism>